<proteinExistence type="inferred from homology"/>
<dbReference type="EC" id="1.2.1.8" evidence="1"/>
<dbReference type="EMBL" id="CP000076">
    <property type="protein sequence ID" value="AAY94957.1"/>
    <property type="molecule type" value="Genomic_DNA"/>
</dbReference>
<dbReference type="RefSeq" id="WP_011063942.1">
    <property type="nucleotide sequence ID" value="NC_004129.6"/>
</dbReference>
<dbReference type="SMR" id="Q4K4K8"/>
<dbReference type="STRING" id="220664.PFL_5767"/>
<dbReference type="GeneID" id="57478721"/>
<dbReference type="KEGG" id="pfl:PFL_5767"/>
<dbReference type="PATRIC" id="fig|220664.5.peg.5880"/>
<dbReference type="eggNOG" id="COG1012">
    <property type="taxonomic scope" value="Bacteria"/>
</dbReference>
<dbReference type="HOGENOM" id="CLU_005391_0_0_6"/>
<dbReference type="UniPathway" id="UPA00529">
    <property type="reaction ID" value="UER00386"/>
</dbReference>
<dbReference type="Proteomes" id="UP000008540">
    <property type="component" value="Chromosome"/>
</dbReference>
<dbReference type="GO" id="GO:0008802">
    <property type="term" value="F:betaine-aldehyde dehydrogenase (NAD+) activity"/>
    <property type="evidence" value="ECO:0007669"/>
    <property type="project" value="UniProtKB-UniRule"/>
</dbReference>
<dbReference type="GO" id="GO:0046872">
    <property type="term" value="F:metal ion binding"/>
    <property type="evidence" value="ECO:0007669"/>
    <property type="project" value="UniProtKB-KW"/>
</dbReference>
<dbReference type="GO" id="GO:0019285">
    <property type="term" value="P:glycine betaine biosynthetic process from choline"/>
    <property type="evidence" value="ECO:0007669"/>
    <property type="project" value="UniProtKB-UniRule"/>
</dbReference>
<dbReference type="CDD" id="cd07090">
    <property type="entry name" value="ALDH_F9_TMBADH"/>
    <property type="match status" value="1"/>
</dbReference>
<dbReference type="FunFam" id="3.40.309.10:FF:000014">
    <property type="entry name" value="NAD/NADP-dependent betaine aldehyde dehydrogenase"/>
    <property type="match status" value="1"/>
</dbReference>
<dbReference type="FunFam" id="3.40.605.10:FF:000007">
    <property type="entry name" value="NAD/NADP-dependent betaine aldehyde dehydrogenase"/>
    <property type="match status" value="1"/>
</dbReference>
<dbReference type="Gene3D" id="3.40.605.10">
    <property type="entry name" value="Aldehyde Dehydrogenase, Chain A, domain 1"/>
    <property type="match status" value="1"/>
</dbReference>
<dbReference type="Gene3D" id="3.40.309.10">
    <property type="entry name" value="Aldehyde Dehydrogenase, Chain A, domain 2"/>
    <property type="match status" value="1"/>
</dbReference>
<dbReference type="HAMAP" id="MF_00804">
    <property type="entry name" value="BADH"/>
    <property type="match status" value="1"/>
</dbReference>
<dbReference type="InterPro" id="IPR016161">
    <property type="entry name" value="Ald_DH/histidinol_DH"/>
</dbReference>
<dbReference type="InterPro" id="IPR016163">
    <property type="entry name" value="Ald_DH_C"/>
</dbReference>
<dbReference type="InterPro" id="IPR016160">
    <property type="entry name" value="Ald_DH_CS_CYS"/>
</dbReference>
<dbReference type="InterPro" id="IPR029510">
    <property type="entry name" value="Ald_DH_CS_GLU"/>
</dbReference>
<dbReference type="InterPro" id="IPR016162">
    <property type="entry name" value="Ald_DH_N"/>
</dbReference>
<dbReference type="InterPro" id="IPR015590">
    <property type="entry name" value="Aldehyde_DH_dom"/>
</dbReference>
<dbReference type="InterPro" id="IPR011264">
    <property type="entry name" value="BADH"/>
</dbReference>
<dbReference type="NCBIfam" id="TIGR01804">
    <property type="entry name" value="BADH"/>
    <property type="match status" value="1"/>
</dbReference>
<dbReference type="NCBIfam" id="NF009725">
    <property type="entry name" value="PRK13252.1"/>
    <property type="match status" value="1"/>
</dbReference>
<dbReference type="PANTHER" id="PTHR11699">
    <property type="entry name" value="ALDEHYDE DEHYDROGENASE-RELATED"/>
    <property type="match status" value="1"/>
</dbReference>
<dbReference type="Pfam" id="PF00171">
    <property type="entry name" value="Aldedh"/>
    <property type="match status" value="1"/>
</dbReference>
<dbReference type="SUPFAM" id="SSF53720">
    <property type="entry name" value="ALDH-like"/>
    <property type="match status" value="1"/>
</dbReference>
<dbReference type="PROSITE" id="PS00070">
    <property type="entry name" value="ALDEHYDE_DEHYDR_CYS"/>
    <property type="match status" value="1"/>
</dbReference>
<dbReference type="PROSITE" id="PS00687">
    <property type="entry name" value="ALDEHYDE_DEHYDR_GLU"/>
    <property type="match status" value="1"/>
</dbReference>
<evidence type="ECO:0000255" key="1">
    <source>
        <dbReference type="HAMAP-Rule" id="MF_00804"/>
    </source>
</evidence>
<name>BETB_PSEF5</name>
<protein>
    <recommendedName>
        <fullName evidence="1">Betaine aldehyde dehydrogenase</fullName>
        <shortName evidence="1">BADH</shortName>
        <ecNumber evidence="1">1.2.1.8</ecNumber>
    </recommendedName>
</protein>
<reference key="1">
    <citation type="journal article" date="2005" name="Nat. Biotechnol.">
        <title>Complete genome sequence of the plant commensal Pseudomonas fluorescens Pf-5.</title>
        <authorList>
            <person name="Paulsen I.T."/>
            <person name="Press C.M."/>
            <person name="Ravel J."/>
            <person name="Kobayashi D.Y."/>
            <person name="Myers G.S.A."/>
            <person name="Mavrodi D.V."/>
            <person name="DeBoy R.T."/>
            <person name="Seshadri R."/>
            <person name="Ren Q."/>
            <person name="Madupu R."/>
            <person name="Dodson R.J."/>
            <person name="Durkin A.S."/>
            <person name="Brinkac L.M."/>
            <person name="Daugherty S.C."/>
            <person name="Sullivan S.A."/>
            <person name="Rosovitz M.J."/>
            <person name="Gwinn M.L."/>
            <person name="Zhou L."/>
            <person name="Schneider D.J."/>
            <person name="Cartinhour S.W."/>
            <person name="Nelson W.C."/>
            <person name="Weidman J."/>
            <person name="Watkins K."/>
            <person name="Tran K."/>
            <person name="Khouri H."/>
            <person name="Pierson E.A."/>
            <person name="Pierson L.S. III"/>
            <person name="Thomashow L.S."/>
            <person name="Loper J.E."/>
        </authorList>
    </citation>
    <scope>NUCLEOTIDE SEQUENCE [LARGE SCALE GENOMIC DNA]</scope>
    <source>
        <strain>ATCC BAA-477 / NRRL B-23932 / Pf-5</strain>
    </source>
</reference>
<gene>
    <name evidence="1" type="primary">betB</name>
    <name type="ordered locus">PFL_5767</name>
</gene>
<accession>Q4K4K8</accession>
<comment type="function">
    <text evidence="1">Involved in the biosynthesis of the osmoprotectant glycine betaine. Catalyzes the irreversible oxidation of betaine aldehyde to the corresponding acid.</text>
</comment>
<comment type="catalytic activity">
    <reaction evidence="1">
        <text>betaine aldehyde + NAD(+) + H2O = glycine betaine + NADH + 2 H(+)</text>
        <dbReference type="Rhea" id="RHEA:15305"/>
        <dbReference type="ChEBI" id="CHEBI:15377"/>
        <dbReference type="ChEBI" id="CHEBI:15378"/>
        <dbReference type="ChEBI" id="CHEBI:15710"/>
        <dbReference type="ChEBI" id="CHEBI:17750"/>
        <dbReference type="ChEBI" id="CHEBI:57540"/>
        <dbReference type="ChEBI" id="CHEBI:57945"/>
        <dbReference type="EC" id="1.2.1.8"/>
    </reaction>
    <physiologicalReaction direction="left-to-right" evidence="1">
        <dbReference type="Rhea" id="RHEA:15306"/>
    </physiologicalReaction>
</comment>
<comment type="cofactor">
    <cofactor evidence="1">
        <name>K(+)</name>
        <dbReference type="ChEBI" id="CHEBI:29103"/>
    </cofactor>
    <text evidence="1">Binds 2 potassium ions per subunit.</text>
</comment>
<comment type="pathway">
    <text evidence="1">Amine and polyamine biosynthesis; betaine biosynthesis via choline pathway; betaine from betaine aldehyde: step 1/1.</text>
</comment>
<comment type="subunit">
    <text evidence="1">Dimer of dimers.</text>
</comment>
<comment type="similarity">
    <text evidence="1">Belongs to the aldehyde dehydrogenase family.</text>
</comment>
<keyword id="KW-0479">Metal-binding</keyword>
<keyword id="KW-0520">NAD</keyword>
<keyword id="KW-0521">NADP</keyword>
<keyword id="KW-0558">Oxidation</keyword>
<keyword id="KW-0560">Oxidoreductase</keyword>
<keyword id="KW-0630">Potassium</keyword>
<organism>
    <name type="scientific">Pseudomonas fluorescens (strain ATCC BAA-477 / NRRL B-23932 / Pf-5)</name>
    <dbReference type="NCBI Taxonomy" id="220664"/>
    <lineage>
        <taxon>Bacteria</taxon>
        <taxon>Pseudomonadati</taxon>
        <taxon>Pseudomonadota</taxon>
        <taxon>Gammaproteobacteria</taxon>
        <taxon>Pseudomonadales</taxon>
        <taxon>Pseudomonadaceae</taxon>
        <taxon>Pseudomonas</taxon>
    </lineage>
</organism>
<feature type="chain" id="PRO_0000056550" description="Betaine aldehyde dehydrogenase">
    <location>
        <begin position="1"/>
        <end position="490"/>
    </location>
</feature>
<feature type="active site" description="Charge relay system" evidence="1">
    <location>
        <position position="162"/>
    </location>
</feature>
<feature type="active site" description="Proton acceptor" evidence="1">
    <location>
        <position position="252"/>
    </location>
</feature>
<feature type="active site" description="Nucleophile" evidence="1">
    <location>
        <position position="286"/>
    </location>
</feature>
<feature type="active site" description="Charge relay system" evidence="1">
    <location>
        <position position="464"/>
    </location>
</feature>
<feature type="binding site" evidence="1">
    <location>
        <position position="27"/>
    </location>
    <ligand>
        <name>K(+)</name>
        <dbReference type="ChEBI" id="CHEBI:29103"/>
        <label>1</label>
    </ligand>
</feature>
<feature type="binding site" evidence="1">
    <location>
        <position position="93"/>
    </location>
    <ligand>
        <name>K(+)</name>
        <dbReference type="ChEBI" id="CHEBI:29103"/>
        <label>1</label>
    </ligand>
</feature>
<feature type="binding site" evidence="1">
    <location>
        <begin position="150"/>
        <end position="152"/>
    </location>
    <ligand>
        <name>NAD(+)</name>
        <dbReference type="ChEBI" id="CHEBI:57540"/>
    </ligand>
</feature>
<feature type="binding site" evidence="1">
    <location>
        <begin position="176"/>
        <end position="179"/>
    </location>
    <ligand>
        <name>NAD(+)</name>
        <dbReference type="ChEBI" id="CHEBI:57540"/>
    </ligand>
</feature>
<feature type="binding site" evidence="1">
    <location>
        <position position="180"/>
    </location>
    <ligand>
        <name>K(+)</name>
        <dbReference type="ChEBI" id="CHEBI:29103"/>
        <label>1</label>
    </ligand>
</feature>
<feature type="binding site" evidence="1">
    <location>
        <begin position="230"/>
        <end position="233"/>
    </location>
    <ligand>
        <name>NAD(+)</name>
        <dbReference type="ChEBI" id="CHEBI:57540"/>
    </ligand>
</feature>
<feature type="binding site" evidence="1">
    <location>
        <position position="246"/>
    </location>
    <ligand>
        <name>K(+)</name>
        <dbReference type="ChEBI" id="CHEBI:29103"/>
        <label>2</label>
    </ligand>
</feature>
<feature type="binding site" evidence="1">
    <location>
        <position position="254"/>
    </location>
    <ligand>
        <name>NAD(+)</name>
        <dbReference type="ChEBI" id="CHEBI:57540"/>
    </ligand>
</feature>
<feature type="binding site" description="covalent" evidence="1">
    <location>
        <position position="286"/>
    </location>
    <ligand>
        <name>NAD(+)</name>
        <dbReference type="ChEBI" id="CHEBI:57540"/>
    </ligand>
</feature>
<feature type="binding site" evidence="1">
    <location>
        <position position="387"/>
    </location>
    <ligand>
        <name>NAD(+)</name>
        <dbReference type="ChEBI" id="CHEBI:57540"/>
    </ligand>
</feature>
<feature type="binding site" evidence="1">
    <location>
        <position position="457"/>
    </location>
    <ligand>
        <name>K(+)</name>
        <dbReference type="ChEBI" id="CHEBI:29103"/>
        <label>2</label>
    </ligand>
</feature>
<feature type="binding site" evidence="1">
    <location>
        <position position="460"/>
    </location>
    <ligand>
        <name>K(+)</name>
        <dbReference type="ChEBI" id="CHEBI:29103"/>
        <label>2</label>
    </ligand>
</feature>
<feature type="site" description="Seems to be a necessary countercharge to the potassium cations" evidence="1">
    <location>
        <position position="248"/>
    </location>
</feature>
<feature type="modified residue" description="Cysteine sulfenic acid (-SOH)" evidence="1">
    <location>
        <position position="286"/>
    </location>
</feature>
<sequence>MARFELQKLYIDGGYTDAGSDATFDAINPANGEVLAQVQRATKEDVERAVVSAEKGQKIWAAMTAMERSRILRRAVEILRERNDELAALETLDTGKAFSETKYVDIVTGADVLEYYAGLVPAIEGEQIPLRTTSFVYTRREPLGVVAGIGAWNYPIQIALWKSAPALAAGNAMIFKPSEVTSLTTLKLAEIYTEAGLPDGVFNVLTGSGREVGTWLTEHPRIEKVSFTGGTDTGKKVMASASSSSLKDVTMELGGKSPLIIFDDADLDRAADTAMMANFYSSGQVCTNGTRVFVPSHLKAAFEAKIAERVARIRIGNPEDENTNFGPLVSFPHMESVLGYIAKGKEEGARVLCGGERLTDGEFAKGAFVAPTVFTDCTDDMTIVREEIFGPVMAILTYETEEEVIRRANDTDFGLAAGLVTKDLNRAHRVIHQLEAGICWINAWGESDAKMPVGGYKQSGVGRENGISSLNNFTRIKSVQVELGDYASVF</sequence>